<reference key="1">
    <citation type="journal article" date="1989" name="Nature">
        <title>Sequence of a novel simian immunodeficiency virus from a wild-caught African mandrill.</title>
        <authorList>
            <person name="Tsujimoto H."/>
            <person name="Hasegawa A."/>
            <person name="Maki N."/>
            <person name="Fukasawa M."/>
            <person name="Miura T."/>
            <person name="Speidel S."/>
            <person name="Cooper R.W."/>
            <person name="Moriyama E.N."/>
            <person name="Gojobori T."/>
            <person name="Hayami M."/>
        </authorList>
    </citation>
    <scope>NUCLEOTIDE SEQUENCE [GENOMIC RNA]</scope>
</reference>
<organism>
    <name type="scientific">Simian immunodeficiency virus (isolate GB1)</name>
    <name type="common">SIV-mnd</name>
    <name type="synonym">Simian immunodeficiency virus mandrill</name>
    <dbReference type="NCBI Taxonomy" id="11732"/>
    <lineage>
        <taxon>Viruses</taxon>
        <taxon>Riboviria</taxon>
        <taxon>Pararnavirae</taxon>
        <taxon>Artverviricota</taxon>
        <taxon>Revtraviricetes</taxon>
        <taxon>Ortervirales</taxon>
        <taxon>Retroviridae</taxon>
        <taxon>Orthoretrovirinae</taxon>
        <taxon>Lentivirus</taxon>
        <taxon>Simian immunodeficiency virus</taxon>
    </lineage>
</organism>
<dbReference type="EMBL" id="M27470">
    <property type="protein sequence ID" value="AAB49570.1"/>
    <property type="molecule type" value="Genomic_RNA"/>
</dbReference>
<dbReference type="SMR" id="P22383"/>
<dbReference type="Proteomes" id="UP000259373">
    <property type="component" value="Segment"/>
</dbReference>
<dbReference type="GO" id="GO:0030430">
    <property type="term" value="C:host cell cytoplasm"/>
    <property type="evidence" value="ECO:0007669"/>
    <property type="project" value="UniProtKB-SubCell"/>
</dbReference>
<dbReference type="GO" id="GO:0020002">
    <property type="term" value="C:host cell plasma membrane"/>
    <property type="evidence" value="ECO:0007669"/>
    <property type="project" value="UniProtKB-SubCell"/>
</dbReference>
<dbReference type="GO" id="GO:0016020">
    <property type="term" value="C:membrane"/>
    <property type="evidence" value="ECO:0007669"/>
    <property type="project" value="UniProtKB-KW"/>
</dbReference>
<dbReference type="GO" id="GO:0044423">
    <property type="term" value="C:virion component"/>
    <property type="evidence" value="ECO:0007669"/>
    <property type="project" value="UniProtKB-KW"/>
</dbReference>
<dbReference type="GO" id="GO:0019058">
    <property type="term" value="P:viral life cycle"/>
    <property type="evidence" value="ECO:0007669"/>
    <property type="project" value="InterPro"/>
</dbReference>
<dbReference type="InterPro" id="IPR000475">
    <property type="entry name" value="Vif"/>
</dbReference>
<dbReference type="Pfam" id="PF00559">
    <property type="entry name" value="Vif"/>
    <property type="match status" value="1"/>
</dbReference>
<dbReference type="PRINTS" id="PR00349">
    <property type="entry name" value="VIRIONINFFCT"/>
</dbReference>
<accession>P22383</accession>
<protein>
    <recommendedName>
        <fullName>Virion infectivity factor</fullName>
        <shortName>Vif</shortName>
    </recommendedName>
    <alternativeName>
        <fullName>Q protein</fullName>
    </alternativeName>
    <alternativeName>
        <fullName>SOR protein</fullName>
    </alternativeName>
</protein>
<feature type="chain" id="PRO_0000085330" description="Virion infectivity factor">
    <location>
        <begin position="1"/>
        <end position="172"/>
    </location>
</feature>
<feature type="short sequence motif" description="HCCH motif" evidence="1">
    <location>
        <begin position="119"/>
        <end position="150"/>
    </location>
</feature>
<feature type="short sequence motif" description="BC-box-like motif" evidence="1">
    <location>
        <begin position="157"/>
        <end position="166"/>
    </location>
</feature>
<feature type="modified residue" description="Phosphothreonine; by host" evidence="1">
    <location>
        <position position="107"/>
    </location>
</feature>
<feature type="modified residue" description="Phosphoserine; by host" evidence="1">
    <location>
        <position position="157"/>
    </location>
</feature>
<evidence type="ECO:0000250" key="1"/>
<evidence type="ECO:0000305" key="2"/>
<organismHost>
    <name type="scientific">Cercopithecidae</name>
    <name type="common">Old World monkeys</name>
    <dbReference type="NCBI Taxonomy" id="9527"/>
</organismHost>
<proteinExistence type="evidence at transcript level"/>
<keyword id="KW-1032">Host cell membrane</keyword>
<keyword id="KW-1035">Host cytoplasm</keyword>
<keyword id="KW-1043">Host membrane</keyword>
<keyword id="KW-0945">Host-virus interaction</keyword>
<keyword id="KW-0472">Membrane</keyword>
<keyword id="KW-0597">Phosphoprotein</keyword>
<keyword id="KW-0832">Ubl conjugation</keyword>
<keyword id="KW-0833">Ubl conjugation pathway</keyword>
<keyword id="KW-0946">Virion</keyword>
<comment type="function">
    <text evidence="1">Counteracts the innate antiviral activity of APOBEC3G. Forms a complex with host APOBEC3G thus preventing the entry of this lethally hypermutating enzyme into progeny virions. Functions as an adapter molecule, recruiting APOBEC3G to the ubiquitin-proteasome machinery. Targets APOBEC3G for degradation through the assembly with elongin BC complex, CUL5 and RBX1. Binds viral RNA and affects the stability of viral nucleoprotein core. May play a role in viral morphology (By similarity).</text>
</comment>
<comment type="subunit">
    <text evidence="1">Homomultimer; in vitro and presumably in vivo. Interacts with viral Pr55Gag precursor and host APOBEC3G. The interaction between Vif and APOBEC3G is species-specific, which may play a role in restricting the replication of SIV to their host. Forms an E3 ligase complex by interacting with host CUL5 and elongin BC complex (ELOB and ELOC) (By similarity).</text>
</comment>
<comment type="subcellular location">
    <subcellularLocation>
        <location evidence="1">Host cytoplasm</location>
    </subcellularLocation>
    <subcellularLocation>
        <location evidence="1">Host cell membrane</location>
        <topology evidence="1">Peripheral membrane protein</topology>
        <orientation evidence="1">Cytoplasmic side</orientation>
    </subcellularLocation>
    <subcellularLocation>
        <location evidence="1">Virion</location>
    </subcellularLocation>
    <text evidence="1">Seems to colocalize with intermediate filament vimentin. A fraction is associated with the cytoplasmic side of cellular membranes, presumably via the interaction with Pr55Gag precursor (By similarity).</text>
</comment>
<comment type="induction">
    <text>Expressed late during infection in a Rev-dependent manner.</text>
</comment>
<comment type="domain">
    <text evidence="1">The BC-like-box motif mediates the interaction with elongin BC complex.</text>
</comment>
<comment type="domain">
    <text evidence="1">The HCCH motif (H-x(5)-C-x(18)-C-x(5)-H) mediates the interaction with CUL5.</text>
</comment>
<comment type="PTM">
    <text evidence="1">Processed in virion by the viral protease.</text>
</comment>
<comment type="PTM">
    <text evidence="1">Highly phosphorylated on serine and threonine residues.</text>
</comment>
<comment type="PTM">
    <text evidence="1">Polyubiquitinated and degraded by the proteasome in the presence of APOBEC3G.</text>
</comment>
<comment type="miscellaneous">
    <text>Vif-defective viruses show catastrophic failure in reverse transcription due to APOBEC-induced mutations that initiate a DNA base repair pathway and compromise the structural integrity of the ssDNA. In the absence of Vif, the virion is morphologically abnormal.</text>
</comment>
<comment type="miscellaneous">
    <text>This is an African mandrill isolate.</text>
</comment>
<comment type="similarity">
    <text evidence="2">Belongs to the primate lentivirus group Vif protein family.</text>
</comment>
<name>VIF_SIVGB</name>
<gene>
    <name type="primary">vif</name>
</gene>
<sequence>MERVERIVRLTWKVSSQRIEKWHWLVRRQMAWATANNEEGCWWLYPHFMAYNEWYTCSKVVIIINRDIRLIVRSYWHLQIEVGCLSTYAVSIEAVVRPPPFEKEWCTEITPEVADHLIHLHFYDCFMDSAVMKAIRGEEVLKVCRFPAGHKAQGVLSLQFLCLRVIYGPEER</sequence>